<accession>P20223</accession>
<accession>P74812</accession>
<accession>Q7LYU7</accession>
<comment type="subcellular location">
    <subcellularLocation>
        <location evidence="2">Virion membrane</location>
        <topology evidence="2">Multi-pass membrane protein</topology>
    </subcellularLocation>
</comment>
<comment type="similarity">
    <text evidence="2">Belongs to the fuselloviridae capsid protein VP1/VP3 family.</text>
</comment>
<comment type="caution">
    <text evidence="2">It is uncertain whether Met-1, Met-36 or Val-59 is the initiator.</text>
</comment>
<comment type="sequence caution" evidence="2">
    <conflict type="erroneous initiation">
        <sequence resource="EMBL-CDS" id="CAA28514"/>
    </conflict>
</comment>
<comment type="sequence caution" evidence="2">
    <conflict type="erroneous initiation">
        <sequence resource="EMBL-CDS" id="CAA28515"/>
    </conflict>
</comment>
<reference key="1">
    <citation type="journal article" date="1987" name="Mol. Gen. Genet.">
        <title>Identification and characterization of the genes encoding three structural proteins of the Sulfolobus virus-like particle SSV1.</title>
        <authorList>
            <person name="Reiter W.-D."/>
            <person name="Palm P."/>
            <person name="Henschen A."/>
            <person name="Lottspeich F."/>
            <person name="Zillig W."/>
            <person name="Grampp B."/>
        </authorList>
    </citation>
    <scope>NUCLEOTIDE SEQUENCE [GENOMIC DNA]</scope>
    <scope>PROTEIN SEQUENCE OF 72-140</scope>
</reference>
<reference key="2">
    <citation type="journal article" date="1991" name="Virology">
        <title>Complete nucleotide sequence of the virus SSV1 of the archaebacterium Sulfolobus shibatae.</title>
        <authorList>
            <person name="Palm P."/>
            <person name="Schleper C."/>
            <person name="Grampp B."/>
            <person name="Yeats S."/>
            <person name="McWilliam P."/>
            <person name="Reiter W.-D."/>
            <person name="Zillig W."/>
        </authorList>
    </citation>
    <scope>NUCLEOTIDE SEQUENCE [GENOMIC DNA]</scope>
</reference>
<feature type="propeptide" id="PRO_0000041348" evidence="1">
    <location>
        <begin position="1"/>
        <end position="71"/>
    </location>
</feature>
<feature type="chain" id="PRO_0000041349" description="Structural protein VP1">
    <location>
        <begin position="72"/>
        <end position="144"/>
    </location>
</feature>
<feature type="transmembrane region" description="Helical" evidence="1">
    <location>
        <begin position="76"/>
        <end position="96"/>
    </location>
</feature>
<feature type="transmembrane region" description="Helical" evidence="1">
    <location>
        <begin position="118"/>
        <end position="138"/>
    </location>
</feature>
<protein>
    <recommendedName>
        <fullName>Structural protein VP1</fullName>
    </recommendedName>
</protein>
<evidence type="ECO:0000255" key="1"/>
<evidence type="ECO:0000305" key="2"/>
<proteinExistence type="evidence at protein level"/>
<organism>
    <name type="scientific">Sulfolobus spindle-shape virus 1</name>
    <name type="common">SSV1</name>
    <dbReference type="NCBI Taxonomy" id="244589"/>
    <lineage>
        <taxon>Viruses</taxon>
        <taxon>Viruses incertae sedis</taxon>
        <taxon>Fuselloviridae</taxon>
        <taxon>Alphafusellovirus</taxon>
    </lineage>
</organism>
<gene>
    <name type="primary">VP1</name>
</gene>
<organismHost>
    <name type="scientific">Saccharolobus solfataricus</name>
    <name type="common">Sulfolobus solfataricus</name>
    <dbReference type="NCBI Taxonomy" id="2287"/>
</organismHost>
<sequence length="144" mass="16076">MRLLRSLARKIASLKEAKVALKVASDPRKYFNEEQMTEAYRIFWQTWDGDIIRSARRFVEVAKANPKLTKGEATNIGVLLGLFIFILIGIVLLPVIVSQVNNLTSGTSPQVTGTNATLLNLVPLFYILVLIIVPAVVAYKIYKD</sequence>
<name>VP1_SSV1</name>
<keyword id="KW-0167">Capsid protein</keyword>
<keyword id="KW-0903">Direct protein sequencing</keyword>
<keyword id="KW-0472">Membrane</keyword>
<keyword id="KW-1185">Reference proteome</keyword>
<keyword id="KW-0812">Transmembrane</keyword>
<keyword id="KW-1133">Transmembrane helix</keyword>
<keyword id="KW-0946">Virion</keyword>
<dbReference type="EMBL" id="X04829">
    <property type="protein sequence ID" value="CAA28513.1"/>
    <property type="molecule type" value="Genomic_DNA"/>
</dbReference>
<dbReference type="EMBL" id="X04829">
    <property type="protein sequence ID" value="CAA28514.1"/>
    <property type="status" value="ALT_INIT"/>
    <property type="molecule type" value="Genomic_DNA"/>
</dbReference>
<dbReference type="EMBL" id="X04829">
    <property type="protein sequence ID" value="CAA28515.1"/>
    <property type="status" value="ALT_INIT"/>
    <property type="molecule type" value="Genomic_DNA"/>
</dbReference>
<dbReference type="EMBL" id="X07234">
    <property type="status" value="NOT_ANNOTATED_CDS"/>
    <property type="molecule type" value="Genomic_DNA"/>
</dbReference>
<dbReference type="PIR" id="A40782">
    <property type="entry name" value="VCXDS1"/>
</dbReference>
<dbReference type="SMR" id="P20223"/>
<dbReference type="Proteomes" id="UP000000854">
    <property type="component" value="Genome"/>
</dbReference>
<dbReference type="GO" id="GO:0016020">
    <property type="term" value="C:membrane"/>
    <property type="evidence" value="ECO:0007669"/>
    <property type="project" value="UniProtKB-KW"/>
</dbReference>
<dbReference type="GO" id="GO:0019028">
    <property type="term" value="C:viral capsid"/>
    <property type="evidence" value="ECO:0007669"/>
    <property type="project" value="UniProtKB-KW"/>
</dbReference>
<dbReference type="GO" id="GO:0055036">
    <property type="term" value="C:virion membrane"/>
    <property type="evidence" value="ECO:0007669"/>
    <property type="project" value="UniProtKB-SubCell"/>
</dbReference>
<dbReference type="GO" id="GO:0005198">
    <property type="term" value="F:structural molecule activity"/>
    <property type="evidence" value="ECO:0007669"/>
    <property type="project" value="InterPro"/>
</dbReference>
<dbReference type="InterPro" id="IPR009379">
    <property type="entry name" value="VP1_VP3"/>
</dbReference>
<dbReference type="Pfam" id="PF06281">
    <property type="entry name" value="VP1_VP3"/>
    <property type="match status" value="1"/>
</dbReference>